<proteinExistence type="inferred from homology"/>
<comment type="function">
    <text evidence="1">Condensation of UDP-2,3-diacylglucosamine and 2,3-diacylglucosamine-1-phosphate to form lipid A disaccharide, a precursor of lipid A, a phosphorylated glycolipid that anchors the lipopolysaccharide to the outer membrane of the cell.</text>
</comment>
<comment type="catalytic activity">
    <reaction evidence="1">
        <text>a lipid X + a UDP-2-N,3-O-bis[(3R)-3-hydroxyacyl]-alpha-D-glucosamine = a lipid A disaccharide + UDP + H(+)</text>
        <dbReference type="Rhea" id="RHEA:67828"/>
        <dbReference type="ChEBI" id="CHEBI:15378"/>
        <dbReference type="ChEBI" id="CHEBI:58223"/>
        <dbReference type="ChEBI" id="CHEBI:137748"/>
        <dbReference type="ChEBI" id="CHEBI:176338"/>
        <dbReference type="ChEBI" id="CHEBI:176343"/>
        <dbReference type="EC" id="2.4.1.182"/>
    </reaction>
</comment>
<comment type="pathway">
    <text evidence="1">Bacterial outer membrane biogenesis; LPS lipid A biosynthesis.</text>
</comment>
<comment type="similarity">
    <text evidence="1">Belongs to the LpxB family.</text>
</comment>
<keyword id="KW-0328">Glycosyltransferase</keyword>
<keyword id="KW-0441">Lipid A biosynthesis</keyword>
<keyword id="KW-0444">Lipid biosynthesis</keyword>
<keyword id="KW-0443">Lipid metabolism</keyword>
<keyword id="KW-0808">Transferase</keyword>
<name>LPXB_PSEPW</name>
<gene>
    <name evidence="1" type="primary">lpxB</name>
    <name type="ordered locus">PputW619_4069</name>
</gene>
<evidence type="ECO:0000255" key="1">
    <source>
        <dbReference type="HAMAP-Rule" id="MF_00392"/>
    </source>
</evidence>
<feature type="chain" id="PRO_1000123056" description="Lipid-A-disaccharide synthase">
    <location>
        <begin position="1"/>
        <end position="375"/>
    </location>
</feature>
<sequence length="375" mass="41081">MAQLCVALVAGEASGDILGSGLMRALKARHPQVRFIGVGGPLMEAEGMQSYFPMERLAVMGLVEVLGRLRELLKRRKALIQTLIAEKPDVFIGIDAPDFTLNIELKLRQAGIKTVHYVSPSVWAWRQKRVLKIREGCDLMLTLLPFEARFYEEQGVPVRFVGHPLADTIPLAADRQAARMALGLDAGPVVALMPGSRGGEVGRLGALFLDAAQRLVELIPGVHFVLPCANGARRAQLEQMLEGRELPLTLLDGQSHQALAACDAVLIASGTATLEAMLYKRPMVVAYRLAPLTYWILKRLVKSPYVSLPNLLAQRELVPELLQDAATSEALAQTLAPLVADGRQQTERFDEIHRTLRRDASNQAADAVLALLKDR</sequence>
<dbReference type="EC" id="2.4.1.182" evidence="1"/>
<dbReference type="EMBL" id="CP000949">
    <property type="protein sequence ID" value="ACA74549.1"/>
    <property type="molecule type" value="Genomic_DNA"/>
</dbReference>
<dbReference type="SMR" id="B1JBP7"/>
<dbReference type="STRING" id="390235.PputW619_4069"/>
<dbReference type="CAZy" id="GT19">
    <property type="family name" value="Glycosyltransferase Family 19"/>
</dbReference>
<dbReference type="KEGG" id="ppw:PputW619_4069"/>
<dbReference type="eggNOG" id="COG0763">
    <property type="taxonomic scope" value="Bacteria"/>
</dbReference>
<dbReference type="HOGENOM" id="CLU_036577_3_0_6"/>
<dbReference type="OrthoDB" id="9801642at2"/>
<dbReference type="UniPathway" id="UPA00973"/>
<dbReference type="GO" id="GO:0016020">
    <property type="term" value="C:membrane"/>
    <property type="evidence" value="ECO:0007669"/>
    <property type="project" value="GOC"/>
</dbReference>
<dbReference type="GO" id="GO:0008915">
    <property type="term" value="F:lipid-A-disaccharide synthase activity"/>
    <property type="evidence" value="ECO:0007669"/>
    <property type="project" value="UniProtKB-UniRule"/>
</dbReference>
<dbReference type="GO" id="GO:0005543">
    <property type="term" value="F:phospholipid binding"/>
    <property type="evidence" value="ECO:0007669"/>
    <property type="project" value="TreeGrafter"/>
</dbReference>
<dbReference type="GO" id="GO:0009245">
    <property type="term" value="P:lipid A biosynthetic process"/>
    <property type="evidence" value="ECO:0007669"/>
    <property type="project" value="UniProtKB-UniRule"/>
</dbReference>
<dbReference type="Gene3D" id="3.40.50.2000">
    <property type="entry name" value="Glycogen Phosphorylase B"/>
    <property type="match status" value="1"/>
</dbReference>
<dbReference type="HAMAP" id="MF_00392">
    <property type="entry name" value="LpxB"/>
    <property type="match status" value="1"/>
</dbReference>
<dbReference type="InterPro" id="IPR003835">
    <property type="entry name" value="Glyco_trans_19"/>
</dbReference>
<dbReference type="NCBIfam" id="TIGR00215">
    <property type="entry name" value="lpxB"/>
    <property type="match status" value="1"/>
</dbReference>
<dbReference type="PANTHER" id="PTHR30372">
    <property type="entry name" value="LIPID-A-DISACCHARIDE SYNTHASE"/>
    <property type="match status" value="1"/>
</dbReference>
<dbReference type="PANTHER" id="PTHR30372:SF4">
    <property type="entry name" value="LIPID-A-DISACCHARIDE SYNTHASE, MITOCHONDRIAL-RELATED"/>
    <property type="match status" value="1"/>
</dbReference>
<dbReference type="Pfam" id="PF02684">
    <property type="entry name" value="LpxB"/>
    <property type="match status" value="1"/>
</dbReference>
<dbReference type="SUPFAM" id="SSF53756">
    <property type="entry name" value="UDP-Glycosyltransferase/glycogen phosphorylase"/>
    <property type="match status" value="1"/>
</dbReference>
<organism>
    <name type="scientific">Pseudomonas putida (strain W619)</name>
    <dbReference type="NCBI Taxonomy" id="390235"/>
    <lineage>
        <taxon>Bacteria</taxon>
        <taxon>Pseudomonadati</taxon>
        <taxon>Pseudomonadota</taxon>
        <taxon>Gammaproteobacteria</taxon>
        <taxon>Pseudomonadales</taxon>
        <taxon>Pseudomonadaceae</taxon>
        <taxon>Pseudomonas</taxon>
    </lineage>
</organism>
<accession>B1JBP7</accession>
<protein>
    <recommendedName>
        <fullName evidence="1">Lipid-A-disaccharide synthase</fullName>
        <ecNumber evidence="1">2.4.1.182</ecNumber>
    </recommendedName>
</protein>
<reference key="1">
    <citation type="submission" date="2008-02" db="EMBL/GenBank/DDBJ databases">
        <title>Complete sequence of Pseudomonas putida W619.</title>
        <authorList>
            <person name="Copeland A."/>
            <person name="Lucas S."/>
            <person name="Lapidus A."/>
            <person name="Barry K."/>
            <person name="Detter J.C."/>
            <person name="Glavina del Rio T."/>
            <person name="Dalin E."/>
            <person name="Tice H."/>
            <person name="Pitluck S."/>
            <person name="Chain P."/>
            <person name="Malfatti S."/>
            <person name="Shin M."/>
            <person name="Vergez L."/>
            <person name="Schmutz J."/>
            <person name="Larimer F."/>
            <person name="Land M."/>
            <person name="Hauser L."/>
            <person name="Kyrpides N."/>
            <person name="Kim E."/>
            <person name="Taghavi S."/>
            <person name="Vangronsveld D."/>
            <person name="van der Lelie D."/>
            <person name="Richardson P."/>
        </authorList>
    </citation>
    <scope>NUCLEOTIDE SEQUENCE [LARGE SCALE GENOMIC DNA]</scope>
    <source>
        <strain>W619</strain>
    </source>
</reference>